<keyword id="KW-0067">ATP-binding</keyword>
<keyword id="KW-0997">Cell inner membrane</keyword>
<keyword id="KW-1003">Cell membrane</keyword>
<keyword id="KW-0472">Membrane</keyword>
<keyword id="KW-0500">Molybdenum</keyword>
<keyword id="KW-0547">Nucleotide-binding</keyword>
<keyword id="KW-1185">Reference proteome</keyword>
<keyword id="KW-1278">Translocase</keyword>
<keyword id="KW-0813">Transport</keyword>
<name>MODC_PSESM</name>
<dbReference type="EC" id="7.3.2.5" evidence="1"/>
<dbReference type="EMBL" id="AE016853">
    <property type="protein sequence ID" value="AAO56467.1"/>
    <property type="molecule type" value="Genomic_DNA"/>
</dbReference>
<dbReference type="RefSeq" id="NP_792772.1">
    <property type="nucleotide sequence ID" value="NC_004578.1"/>
</dbReference>
<dbReference type="RefSeq" id="WP_011104308.1">
    <property type="nucleotide sequence ID" value="NC_004578.1"/>
</dbReference>
<dbReference type="SMR" id="Q881C1"/>
<dbReference type="STRING" id="223283.PSPTO_2975"/>
<dbReference type="GeneID" id="1184629"/>
<dbReference type="KEGG" id="pst:PSPTO_2975"/>
<dbReference type="PATRIC" id="fig|223283.9.peg.3035"/>
<dbReference type="eggNOG" id="COG4148">
    <property type="taxonomic scope" value="Bacteria"/>
</dbReference>
<dbReference type="HOGENOM" id="CLU_000604_1_1_6"/>
<dbReference type="OrthoDB" id="9802264at2"/>
<dbReference type="PhylomeDB" id="Q881C1"/>
<dbReference type="Proteomes" id="UP000002515">
    <property type="component" value="Chromosome"/>
</dbReference>
<dbReference type="GO" id="GO:0005886">
    <property type="term" value="C:plasma membrane"/>
    <property type="evidence" value="ECO:0007669"/>
    <property type="project" value="UniProtKB-SubCell"/>
</dbReference>
<dbReference type="GO" id="GO:0015412">
    <property type="term" value="F:ABC-type molybdate transporter activity"/>
    <property type="evidence" value="ECO:0007669"/>
    <property type="project" value="UniProtKB-EC"/>
</dbReference>
<dbReference type="GO" id="GO:0005524">
    <property type="term" value="F:ATP binding"/>
    <property type="evidence" value="ECO:0007669"/>
    <property type="project" value="UniProtKB-KW"/>
</dbReference>
<dbReference type="GO" id="GO:0016887">
    <property type="term" value="F:ATP hydrolysis activity"/>
    <property type="evidence" value="ECO:0007669"/>
    <property type="project" value="InterPro"/>
</dbReference>
<dbReference type="FunFam" id="3.40.50.300:FF:000634">
    <property type="entry name" value="Molybdenum import ATP-binding protein ModC"/>
    <property type="match status" value="1"/>
</dbReference>
<dbReference type="Gene3D" id="2.40.50.100">
    <property type="match status" value="1"/>
</dbReference>
<dbReference type="Gene3D" id="3.40.50.300">
    <property type="entry name" value="P-loop containing nucleotide triphosphate hydrolases"/>
    <property type="match status" value="1"/>
</dbReference>
<dbReference type="InterPro" id="IPR003593">
    <property type="entry name" value="AAA+_ATPase"/>
</dbReference>
<dbReference type="InterPro" id="IPR003439">
    <property type="entry name" value="ABC_transporter-like_ATP-bd"/>
</dbReference>
<dbReference type="InterPro" id="IPR017871">
    <property type="entry name" value="ABC_transporter-like_CS"/>
</dbReference>
<dbReference type="InterPro" id="IPR008995">
    <property type="entry name" value="Mo/tungstate-bd_C_term_dom"/>
</dbReference>
<dbReference type="InterPro" id="IPR011868">
    <property type="entry name" value="ModC_ABC_ATP-bd"/>
</dbReference>
<dbReference type="InterPro" id="IPR050334">
    <property type="entry name" value="Molybdenum_import_ModC"/>
</dbReference>
<dbReference type="InterPro" id="IPR004606">
    <property type="entry name" value="Mop_domain"/>
</dbReference>
<dbReference type="InterPro" id="IPR027417">
    <property type="entry name" value="P-loop_NTPase"/>
</dbReference>
<dbReference type="InterPro" id="IPR005116">
    <property type="entry name" value="Transp-assoc_OB_typ1"/>
</dbReference>
<dbReference type="NCBIfam" id="TIGR02142">
    <property type="entry name" value="modC_ABC"/>
    <property type="match status" value="1"/>
</dbReference>
<dbReference type="PANTHER" id="PTHR43514">
    <property type="entry name" value="ABC TRANSPORTER I FAMILY MEMBER 10"/>
    <property type="match status" value="1"/>
</dbReference>
<dbReference type="PANTHER" id="PTHR43514:SF10">
    <property type="entry name" value="MOLYBDENUM IMPORT ATP-BINDING PROTEIN MODC 2"/>
    <property type="match status" value="1"/>
</dbReference>
<dbReference type="Pfam" id="PF00005">
    <property type="entry name" value="ABC_tran"/>
    <property type="match status" value="1"/>
</dbReference>
<dbReference type="Pfam" id="PF03459">
    <property type="entry name" value="TOBE"/>
    <property type="match status" value="1"/>
</dbReference>
<dbReference type="SMART" id="SM00382">
    <property type="entry name" value="AAA"/>
    <property type="match status" value="1"/>
</dbReference>
<dbReference type="SUPFAM" id="SSF50331">
    <property type="entry name" value="MOP-like"/>
    <property type="match status" value="1"/>
</dbReference>
<dbReference type="SUPFAM" id="SSF52540">
    <property type="entry name" value="P-loop containing nucleoside triphosphate hydrolases"/>
    <property type="match status" value="1"/>
</dbReference>
<dbReference type="PROSITE" id="PS00211">
    <property type="entry name" value="ABC_TRANSPORTER_1"/>
    <property type="match status" value="1"/>
</dbReference>
<dbReference type="PROSITE" id="PS50893">
    <property type="entry name" value="ABC_TRANSPORTER_2"/>
    <property type="match status" value="1"/>
</dbReference>
<dbReference type="PROSITE" id="PS51241">
    <property type="entry name" value="MODC"/>
    <property type="match status" value="1"/>
</dbReference>
<dbReference type="PROSITE" id="PS51866">
    <property type="entry name" value="MOP"/>
    <property type="match status" value="1"/>
</dbReference>
<accession>Q881C1</accession>
<feature type="chain" id="PRO_0000092550" description="Molybdenum import ATP-binding protein ModC">
    <location>
        <begin position="1"/>
        <end position="362"/>
    </location>
</feature>
<feature type="domain" description="ABC transporter" evidence="1">
    <location>
        <begin position="2"/>
        <end position="236"/>
    </location>
</feature>
<feature type="domain" description="Mop" evidence="2">
    <location>
        <begin position="297"/>
        <end position="362"/>
    </location>
</feature>
<feature type="binding site" evidence="1">
    <location>
        <begin position="34"/>
        <end position="41"/>
    </location>
    <ligand>
        <name>ATP</name>
        <dbReference type="ChEBI" id="CHEBI:30616"/>
    </ligand>
</feature>
<evidence type="ECO:0000255" key="1">
    <source>
        <dbReference type="HAMAP-Rule" id="MF_01705"/>
    </source>
</evidence>
<evidence type="ECO:0000255" key="2">
    <source>
        <dbReference type="PROSITE-ProRule" id="PRU01213"/>
    </source>
</evidence>
<protein>
    <recommendedName>
        <fullName evidence="1">Molybdenum import ATP-binding protein ModC</fullName>
        <ecNumber evidence="1">7.3.2.5</ecNumber>
    </recommendedName>
</protein>
<organism>
    <name type="scientific">Pseudomonas syringae pv. tomato (strain ATCC BAA-871 / DC3000)</name>
    <dbReference type="NCBI Taxonomy" id="223283"/>
    <lineage>
        <taxon>Bacteria</taxon>
        <taxon>Pseudomonadati</taxon>
        <taxon>Pseudomonadota</taxon>
        <taxon>Gammaproteobacteria</taxon>
        <taxon>Pseudomonadales</taxon>
        <taxon>Pseudomonadaceae</taxon>
        <taxon>Pseudomonas</taxon>
    </lineage>
</organism>
<reference key="1">
    <citation type="journal article" date="2003" name="Proc. Natl. Acad. Sci. U.S.A.">
        <title>The complete genome sequence of the Arabidopsis and tomato pathogen Pseudomonas syringae pv. tomato DC3000.</title>
        <authorList>
            <person name="Buell C.R."/>
            <person name="Joardar V."/>
            <person name="Lindeberg M."/>
            <person name="Selengut J."/>
            <person name="Paulsen I.T."/>
            <person name="Gwinn M.L."/>
            <person name="Dodson R.J."/>
            <person name="DeBoy R.T."/>
            <person name="Durkin A.S."/>
            <person name="Kolonay J.F."/>
            <person name="Madupu R."/>
            <person name="Daugherty S.C."/>
            <person name="Brinkac L.M."/>
            <person name="Beanan M.J."/>
            <person name="Haft D.H."/>
            <person name="Nelson W.C."/>
            <person name="Davidsen T.M."/>
            <person name="Zafar N."/>
            <person name="Zhou L."/>
            <person name="Liu J."/>
            <person name="Yuan Q."/>
            <person name="Khouri H.M."/>
            <person name="Fedorova N.B."/>
            <person name="Tran B."/>
            <person name="Russell D."/>
            <person name="Berry K.J."/>
            <person name="Utterback T.R."/>
            <person name="Van Aken S.E."/>
            <person name="Feldblyum T.V."/>
            <person name="D'Ascenzo M."/>
            <person name="Deng W.-L."/>
            <person name="Ramos A.R."/>
            <person name="Alfano J.R."/>
            <person name="Cartinhour S."/>
            <person name="Chatterjee A.K."/>
            <person name="Delaney T.P."/>
            <person name="Lazarowitz S.G."/>
            <person name="Martin G.B."/>
            <person name="Schneider D.J."/>
            <person name="Tang X."/>
            <person name="Bender C.L."/>
            <person name="White O."/>
            <person name="Fraser C.M."/>
            <person name="Collmer A."/>
        </authorList>
    </citation>
    <scope>NUCLEOTIDE SEQUENCE [LARGE SCALE GENOMIC DNA]</scope>
    <source>
        <strain>ATCC BAA-871 / DC3000</strain>
    </source>
</reference>
<sequence length="362" mass="39908">MVSPIEVRLQMTYPEFTVSTDLALPGAGITALFGPSGSGKTTCLRCIAGLEKAEQGFIRVHDEVWQDSENGVFLAPHKRAIGYVFQEASLFDHLSVRANLEFGLKRIPRPQRRIELQQATELLGIDHLLERRPDKLSGGERQRVGIARALLTSPRLMLLDEPLAALDTKRKGEILPYLERLHRELDIPMLYVSHAQDEVARLADHLVLLEAGKVLASGPIRETLARLDLPLAMGDDAGVVIEGTVSAYDRHYQLLTVTLPGSNLCMRVAHAELQIGTLLRVKVQARDVSLNLQSDDHSSILNRLPVTVLEEALADNLAHVLVKLNAGGTPLLARITRYSSDQLNLHRGQTLWAQIKAVAVLA</sequence>
<comment type="function">
    <text evidence="1">Part of the ABC transporter complex ModABC involved in molybdenum import. Responsible for energy coupling to the transport system.</text>
</comment>
<comment type="catalytic activity">
    <reaction evidence="1">
        <text>molybdate(out) + ATP + H2O = molybdate(in) + ADP + phosphate + H(+)</text>
        <dbReference type="Rhea" id="RHEA:22020"/>
        <dbReference type="ChEBI" id="CHEBI:15377"/>
        <dbReference type="ChEBI" id="CHEBI:15378"/>
        <dbReference type="ChEBI" id="CHEBI:30616"/>
        <dbReference type="ChEBI" id="CHEBI:36264"/>
        <dbReference type="ChEBI" id="CHEBI:43474"/>
        <dbReference type="ChEBI" id="CHEBI:456216"/>
        <dbReference type="EC" id="7.3.2.5"/>
    </reaction>
</comment>
<comment type="subunit">
    <text evidence="1">The complex is composed of two ATP-binding proteins (ModC), two transmembrane proteins (ModB) and a solute-binding protein (ModA).</text>
</comment>
<comment type="subcellular location">
    <subcellularLocation>
        <location evidence="1">Cell inner membrane</location>
        <topology evidence="1">Peripheral membrane protein</topology>
    </subcellularLocation>
</comment>
<comment type="similarity">
    <text evidence="1">Belongs to the ABC transporter superfamily. Molybdate importer (TC 3.A.1.8) family.</text>
</comment>
<proteinExistence type="inferred from homology"/>
<gene>
    <name evidence="1" type="primary">modC</name>
    <name type="ordered locus">PSPTO_2975</name>
</gene>